<proteinExistence type="inferred from homology"/>
<evidence type="ECO:0000255" key="1">
    <source>
        <dbReference type="HAMAP-Rule" id="MF_00600"/>
    </source>
</evidence>
<sequence length="542" mass="56666">MSKIIAFDEEARRGLERGMNQLADAVKVTLGPKGRNVVLEKKWGAPTITNDGVSIAKEIELEDPYEKIGAELVKEVAKKTDDVAGDGTTTATVLAQALVREGLRNVAAGANPMGLKRGIEKAVEAVTEQLLGAAKEVTTKEQIAATAGISAGDASIGELIAEALDKVGKEGVITVEESNTFGLELELTEGMRFDKGYISPYFVTDAERQETELEDPYILILNSKISTVKDLLPLLEKVMQSGKPLVIVAEDVEGEALATLVVNKIRGTFKSVAVKAPGFGDRRKAMLGDIAILTGGQVISEEVGLKLDTADLDLLGRARKVVVTKDETTIVEGAGDADAIAGRVGQIRAEIERSDSDYDREKLQERLAKLAGGVAVIKAGAATEVELKERKHRIEDAVRNAKAAVEEGIVAGGGVALIQAGVLAFEKLELVGDEATGANIVKVAIEAPLKQIAINAGLEGGVVAEKVRNLPTGHGLNAATGEYVDLLGAGINDPVKVTRSALQNAASIAALFLTTEAVIADKPEKAAAAPAGGDGGMGGMDF</sequence>
<dbReference type="EC" id="5.6.1.7" evidence="1"/>
<dbReference type="EMBL" id="CP000750">
    <property type="protein sequence ID" value="ABS05099.1"/>
    <property type="molecule type" value="Genomic_DNA"/>
</dbReference>
<dbReference type="RefSeq" id="WP_012086637.1">
    <property type="nucleotide sequence ID" value="NC_009664.2"/>
</dbReference>
<dbReference type="SMR" id="A6WE60"/>
<dbReference type="STRING" id="266940.Krad_3636"/>
<dbReference type="KEGG" id="kra:Krad_3636"/>
<dbReference type="eggNOG" id="COG0459">
    <property type="taxonomic scope" value="Bacteria"/>
</dbReference>
<dbReference type="HOGENOM" id="CLU_016503_3_0_11"/>
<dbReference type="OrthoDB" id="9766614at2"/>
<dbReference type="Proteomes" id="UP000001116">
    <property type="component" value="Chromosome"/>
</dbReference>
<dbReference type="GO" id="GO:0005737">
    <property type="term" value="C:cytoplasm"/>
    <property type="evidence" value="ECO:0007669"/>
    <property type="project" value="UniProtKB-SubCell"/>
</dbReference>
<dbReference type="GO" id="GO:0005524">
    <property type="term" value="F:ATP binding"/>
    <property type="evidence" value="ECO:0007669"/>
    <property type="project" value="UniProtKB-UniRule"/>
</dbReference>
<dbReference type="GO" id="GO:0140662">
    <property type="term" value="F:ATP-dependent protein folding chaperone"/>
    <property type="evidence" value="ECO:0007669"/>
    <property type="project" value="InterPro"/>
</dbReference>
<dbReference type="GO" id="GO:0016853">
    <property type="term" value="F:isomerase activity"/>
    <property type="evidence" value="ECO:0007669"/>
    <property type="project" value="UniProtKB-KW"/>
</dbReference>
<dbReference type="GO" id="GO:0051082">
    <property type="term" value="F:unfolded protein binding"/>
    <property type="evidence" value="ECO:0007669"/>
    <property type="project" value="UniProtKB-UniRule"/>
</dbReference>
<dbReference type="GO" id="GO:0042026">
    <property type="term" value="P:protein refolding"/>
    <property type="evidence" value="ECO:0007669"/>
    <property type="project" value="UniProtKB-UniRule"/>
</dbReference>
<dbReference type="CDD" id="cd03344">
    <property type="entry name" value="GroEL"/>
    <property type="match status" value="1"/>
</dbReference>
<dbReference type="FunFam" id="3.50.7.10:FF:000001">
    <property type="entry name" value="60 kDa chaperonin"/>
    <property type="match status" value="1"/>
</dbReference>
<dbReference type="Gene3D" id="3.50.7.10">
    <property type="entry name" value="GroEL"/>
    <property type="match status" value="1"/>
</dbReference>
<dbReference type="Gene3D" id="1.10.560.10">
    <property type="entry name" value="GroEL-like equatorial domain"/>
    <property type="match status" value="1"/>
</dbReference>
<dbReference type="Gene3D" id="3.30.260.10">
    <property type="entry name" value="TCP-1-like chaperonin intermediate domain"/>
    <property type="match status" value="1"/>
</dbReference>
<dbReference type="HAMAP" id="MF_00600">
    <property type="entry name" value="CH60"/>
    <property type="match status" value="1"/>
</dbReference>
<dbReference type="InterPro" id="IPR018370">
    <property type="entry name" value="Chaperonin_Cpn60_CS"/>
</dbReference>
<dbReference type="InterPro" id="IPR001844">
    <property type="entry name" value="Cpn60/GroEL"/>
</dbReference>
<dbReference type="InterPro" id="IPR002423">
    <property type="entry name" value="Cpn60/GroEL/TCP-1"/>
</dbReference>
<dbReference type="InterPro" id="IPR027409">
    <property type="entry name" value="GroEL-like_apical_dom_sf"/>
</dbReference>
<dbReference type="InterPro" id="IPR027413">
    <property type="entry name" value="GROEL-like_equatorial_sf"/>
</dbReference>
<dbReference type="InterPro" id="IPR027410">
    <property type="entry name" value="TCP-1-like_intermed_sf"/>
</dbReference>
<dbReference type="NCBIfam" id="TIGR02348">
    <property type="entry name" value="GroEL"/>
    <property type="match status" value="1"/>
</dbReference>
<dbReference type="NCBIfam" id="NF000592">
    <property type="entry name" value="PRK00013.1"/>
    <property type="match status" value="1"/>
</dbReference>
<dbReference type="NCBIfam" id="NF009487">
    <property type="entry name" value="PRK12849.1"/>
    <property type="match status" value="1"/>
</dbReference>
<dbReference type="NCBIfam" id="NF009488">
    <property type="entry name" value="PRK12850.1"/>
    <property type="match status" value="1"/>
</dbReference>
<dbReference type="NCBIfam" id="NF009489">
    <property type="entry name" value="PRK12851.1"/>
    <property type="match status" value="1"/>
</dbReference>
<dbReference type="PANTHER" id="PTHR45633">
    <property type="entry name" value="60 KDA HEAT SHOCK PROTEIN, MITOCHONDRIAL"/>
    <property type="match status" value="1"/>
</dbReference>
<dbReference type="Pfam" id="PF00118">
    <property type="entry name" value="Cpn60_TCP1"/>
    <property type="match status" value="1"/>
</dbReference>
<dbReference type="PRINTS" id="PR00298">
    <property type="entry name" value="CHAPERONIN60"/>
</dbReference>
<dbReference type="SUPFAM" id="SSF52029">
    <property type="entry name" value="GroEL apical domain-like"/>
    <property type="match status" value="1"/>
</dbReference>
<dbReference type="SUPFAM" id="SSF48592">
    <property type="entry name" value="GroEL equatorial domain-like"/>
    <property type="match status" value="1"/>
</dbReference>
<dbReference type="SUPFAM" id="SSF54849">
    <property type="entry name" value="GroEL-intermediate domain like"/>
    <property type="match status" value="1"/>
</dbReference>
<dbReference type="PROSITE" id="PS00296">
    <property type="entry name" value="CHAPERONINS_CPN60"/>
    <property type="match status" value="1"/>
</dbReference>
<feature type="chain" id="PRO_0000332010" description="Chaperonin GroEL 2">
    <location>
        <begin position="1"/>
        <end position="542"/>
    </location>
</feature>
<feature type="binding site" evidence="1">
    <location>
        <begin position="29"/>
        <end position="32"/>
    </location>
    <ligand>
        <name>ATP</name>
        <dbReference type="ChEBI" id="CHEBI:30616"/>
    </ligand>
</feature>
<feature type="binding site" evidence="1">
    <location>
        <begin position="86"/>
        <end position="90"/>
    </location>
    <ligand>
        <name>ATP</name>
        <dbReference type="ChEBI" id="CHEBI:30616"/>
    </ligand>
</feature>
<feature type="binding site" evidence="1">
    <location>
        <position position="413"/>
    </location>
    <ligand>
        <name>ATP</name>
        <dbReference type="ChEBI" id="CHEBI:30616"/>
    </ligand>
</feature>
<feature type="binding site" evidence="1">
    <location>
        <begin position="477"/>
        <end position="479"/>
    </location>
    <ligand>
        <name>ATP</name>
        <dbReference type="ChEBI" id="CHEBI:30616"/>
    </ligand>
</feature>
<feature type="binding site" evidence="1">
    <location>
        <position position="493"/>
    </location>
    <ligand>
        <name>ATP</name>
        <dbReference type="ChEBI" id="CHEBI:30616"/>
    </ligand>
</feature>
<gene>
    <name evidence="1" type="primary">groEL2</name>
    <name evidence="1" type="synonym">groL2</name>
    <name type="ordered locus">Krad_3636</name>
</gene>
<name>CH602_KINRD</name>
<protein>
    <recommendedName>
        <fullName evidence="1">Chaperonin GroEL 2</fullName>
        <ecNumber evidence="1">5.6.1.7</ecNumber>
    </recommendedName>
    <alternativeName>
        <fullName evidence="1">60 kDa chaperonin 2</fullName>
    </alternativeName>
    <alternativeName>
        <fullName evidence="1">Chaperonin-60 2</fullName>
        <shortName evidence="1">Cpn60 2</shortName>
    </alternativeName>
</protein>
<organism>
    <name type="scientific">Kineococcus radiotolerans (strain ATCC BAA-149 / DSM 14245 / SRS30216)</name>
    <dbReference type="NCBI Taxonomy" id="266940"/>
    <lineage>
        <taxon>Bacteria</taxon>
        <taxon>Bacillati</taxon>
        <taxon>Actinomycetota</taxon>
        <taxon>Actinomycetes</taxon>
        <taxon>Kineosporiales</taxon>
        <taxon>Kineosporiaceae</taxon>
        <taxon>Kineococcus</taxon>
    </lineage>
</organism>
<accession>A6WE60</accession>
<comment type="function">
    <text evidence="1">Together with its co-chaperonin GroES, plays an essential role in assisting protein folding. The GroEL-GroES system forms a nano-cage that allows encapsulation of the non-native substrate proteins and provides a physical environment optimized to promote and accelerate protein folding.</text>
</comment>
<comment type="catalytic activity">
    <reaction evidence="1">
        <text>ATP + H2O + a folded polypeptide = ADP + phosphate + an unfolded polypeptide.</text>
        <dbReference type="EC" id="5.6.1.7"/>
    </reaction>
</comment>
<comment type="subunit">
    <text evidence="1">Forms a cylinder of 14 subunits composed of two heptameric rings stacked back-to-back. Interacts with the co-chaperonin GroES.</text>
</comment>
<comment type="subcellular location">
    <subcellularLocation>
        <location evidence="1">Cytoplasm</location>
    </subcellularLocation>
</comment>
<comment type="similarity">
    <text evidence="1">Belongs to the chaperonin (HSP60) family.</text>
</comment>
<reference key="1">
    <citation type="journal article" date="2008" name="PLoS ONE">
        <title>Survival in nuclear waste, extreme resistance, and potential applications gleaned from the genome sequence of Kineococcus radiotolerans SRS30216.</title>
        <authorList>
            <person name="Bagwell C.E."/>
            <person name="Bhat S."/>
            <person name="Hawkins G.M."/>
            <person name="Smith B.W."/>
            <person name="Biswas T."/>
            <person name="Hoover T.R."/>
            <person name="Saunders E."/>
            <person name="Han C.S."/>
            <person name="Tsodikov O.V."/>
            <person name="Shimkets L.J."/>
        </authorList>
    </citation>
    <scope>NUCLEOTIDE SEQUENCE [LARGE SCALE GENOMIC DNA]</scope>
    <source>
        <strain>ATCC BAA-149 / DSM 14245 / SRS30216</strain>
    </source>
</reference>
<keyword id="KW-0067">ATP-binding</keyword>
<keyword id="KW-0143">Chaperone</keyword>
<keyword id="KW-0963">Cytoplasm</keyword>
<keyword id="KW-0413">Isomerase</keyword>
<keyword id="KW-0547">Nucleotide-binding</keyword>
<keyword id="KW-1185">Reference proteome</keyword>